<reference key="1">
    <citation type="journal article" date="2010" name="Genome Biol. Evol.">
        <title>Continuing evolution of Burkholderia mallei through genome reduction and large-scale rearrangements.</title>
        <authorList>
            <person name="Losada L."/>
            <person name="Ronning C.M."/>
            <person name="DeShazer D."/>
            <person name="Woods D."/>
            <person name="Fedorova N."/>
            <person name="Kim H.S."/>
            <person name="Shabalina S.A."/>
            <person name="Pearson T.R."/>
            <person name="Brinkac L."/>
            <person name="Tan P."/>
            <person name="Nandi T."/>
            <person name="Crabtree J."/>
            <person name="Badger J."/>
            <person name="Beckstrom-Sternberg S."/>
            <person name="Saqib M."/>
            <person name="Schutzer S.E."/>
            <person name="Keim P."/>
            <person name="Nierman W.C."/>
        </authorList>
    </citation>
    <scope>NUCLEOTIDE SEQUENCE [LARGE SCALE GENOMIC DNA]</scope>
    <source>
        <strain>1710b</strain>
    </source>
</reference>
<protein>
    <recommendedName>
        <fullName evidence="1">UPF0060 membrane protein BURPS1710b_1597</fullName>
    </recommendedName>
</protein>
<feature type="chain" id="PRO_0000282212" description="UPF0060 membrane protein BURPS1710b_1597">
    <location>
        <begin position="1"/>
        <end position="110"/>
    </location>
</feature>
<feature type="transmembrane region" description="Helical" evidence="1">
    <location>
        <begin position="9"/>
        <end position="29"/>
    </location>
</feature>
<feature type="transmembrane region" description="Helical" evidence="1">
    <location>
        <begin position="34"/>
        <end position="54"/>
    </location>
</feature>
<feature type="transmembrane region" description="Helical" evidence="1">
    <location>
        <begin position="64"/>
        <end position="84"/>
    </location>
</feature>
<feature type="transmembrane region" description="Helical" evidence="1">
    <location>
        <begin position="86"/>
        <end position="106"/>
    </location>
</feature>
<sequence length="110" mass="11439">MLSLAKIAALFVLTAVAEIVGCYLPWLVLKAGKPAWLLAPAALSLALFAWLLTLHPAAAARTYAAYGGVYIAVALAWLRIVDGVPLSRWDVAGAALALAGMSVIALQPRG</sequence>
<accession>Q3JTV2</accession>
<gene>
    <name type="ordered locus">BURPS1710b_1597</name>
</gene>
<dbReference type="EMBL" id="CP000124">
    <property type="protein sequence ID" value="ABA47952.1"/>
    <property type="status" value="ALT_INIT"/>
    <property type="molecule type" value="Genomic_DNA"/>
</dbReference>
<dbReference type="RefSeq" id="WP_004193459.1">
    <property type="nucleotide sequence ID" value="NC_007434.1"/>
</dbReference>
<dbReference type="SMR" id="Q3JTV2"/>
<dbReference type="EnsemblBacteria" id="ABA47952">
    <property type="protein sequence ID" value="ABA47952"/>
    <property type="gene ID" value="BURPS1710b_1597"/>
</dbReference>
<dbReference type="KEGG" id="bpm:BURPS1710b_1597"/>
<dbReference type="HOGENOM" id="CLU_117653_2_0_4"/>
<dbReference type="Proteomes" id="UP000002700">
    <property type="component" value="Chromosome I"/>
</dbReference>
<dbReference type="GO" id="GO:0005886">
    <property type="term" value="C:plasma membrane"/>
    <property type="evidence" value="ECO:0007669"/>
    <property type="project" value="UniProtKB-SubCell"/>
</dbReference>
<dbReference type="HAMAP" id="MF_00010">
    <property type="entry name" value="UPF0060"/>
    <property type="match status" value="1"/>
</dbReference>
<dbReference type="InterPro" id="IPR003844">
    <property type="entry name" value="UPF0060"/>
</dbReference>
<dbReference type="NCBIfam" id="NF002586">
    <property type="entry name" value="PRK02237.1"/>
    <property type="match status" value="1"/>
</dbReference>
<dbReference type="PANTHER" id="PTHR36116">
    <property type="entry name" value="UPF0060 MEMBRANE PROTEIN YNFA"/>
    <property type="match status" value="1"/>
</dbReference>
<dbReference type="PANTHER" id="PTHR36116:SF1">
    <property type="entry name" value="UPF0060 MEMBRANE PROTEIN YNFA"/>
    <property type="match status" value="1"/>
</dbReference>
<dbReference type="Pfam" id="PF02694">
    <property type="entry name" value="UPF0060"/>
    <property type="match status" value="1"/>
</dbReference>
<dbReference type="SUPFAM" id="SSF103481">
    <property type="entry name" value="Multidrug resistance efflux transporter EmrE"/>
    <property type="match status" value="1"/>
</dbReference>
<proteinExistence type="inferred from homology"/>
<comment type="subcellular location">
    <subcellularLocation>
        <location evidence="1">Cell inner membrane</location>
        <topology evidence="1">Multi-pass membrane protein</topology>
    </subcellularLocation>
</comment>
<comment type="similarity">
    <text evidence="1">Belongs to the UPF0060 family.</text>
</comment>
<comment type="sequence caution" evidence="2">
    <conflict type="erroneous initiation">
        <sequence resource="EMBL-CDS" id="ABA47952"/>
    </conflict>
</comment>
<name>Y1597_BURP1</name>
<organism>
    <name type="scientific">Burkholderia pseudomallei (strain 1710b)</name>
    <dbReference type="NCBI Taxonomy" id="320372"/>
    <lineage>
        <taxon>Bacteria</taxon>
        <taxon>Pseudomonadati</taxon>
        <taxon>Pseudomonadota</taxon>
        <taxon>Betaproteobacteria</taxon>
        <taxon>Burkholderiales</taxon>
        <taxon>Burkholderiaceae</taxon>
        <taxon>Burkholderia</taxon>
        <taxon>pseudomallei group</taxon>
    </lineage>
</organism>
<keyword id="KW-0997">Cell inner membrane</keyword>
<keyword id="KW-1003">Cell membrane</keyword>
<keyword id="KW-0472">Membrane</keyword>
<keyword id="KW-0812">Transmembrane</keyword>
<keyword id="KW-1133">Transmembrane helix</keyword>
<evidence type="ECO:0000255" key="1">
    <source>
        <dbReference type="HAMAP-Rule" id="MF_00010"/>
    </source>
</evidence>
<evidence type="ECO:0000305" key="2"/>